<feature type="chain" id="PRO_0000449969" description="Phospholipase A1">
    <location>
        <begin position="1"/>
        <end position="304"/>
    </location>
</feature>
<feature type="active site" description="Nucleophile" evidence="5">
    <location>
        <position position="140"/>
    </location>
</feature>
<feature type="active site" description="Charge relay system" evidence="5">
    <location>
        <position position="168"/>
    </location>
</feature>
<feature type="active site" description="Charge relay system" evidence="5">
    <location>
        <position position="233"/>
    </location>
</feature>
<feature type="glycosylation site" description="N-linked (GlcNAc...) asparagine" evidence="4 6">
    <location>
        <position position="61"/>
    </location>
</feature>
<feature type="disulfide bond" evidence="1">
    <location>
        <begin position="6"/>
        <end position="90"/>
    </location>
</feature>
<feature type="disulfide bond" evidence="1">
    <location>
        <begin position="179"/>
        <end position="184"/>
    </location>
</feature>
<feature type="disulfide bond" evidence="1">
    <location>
        <begin position="222"/>
        <end position="231"/>
    </location>
</feature>
<feature type="disulfide bond" evidence="1">
    <location>
        <begin position="248"/>
        <end position="272"/>
    </location>
</feature>
<feature type="disulfide bond" evidence="1">
    <location>
        <begin position="249"/>
        <end position="297"/>
    </location>
</feature>
<feature type="disulfide bond" evidence="1">
    <location>
        <begin position="265"/>
        <end position="270"/>
    </location>
</feature>
<protein>
    <recommendedName>
        <fullName evidence="9">Phospholipase A1</fullName>
        <shortName evidence="9">PLA1</shortName>
        <ecNumber evidence="2">3.1.1.32</ecNumber>
    </recommendedName>
    <alternativeName>
        <fullName evidence="8">Vesp v 1</fullName>
    </alternativeName>
</protein>
<reference evidence="9" key="1">
    <citation type="journal article" date="2015" name="Sci. Rep.">
        <title>Deciphering the venomic transcriptome of killer-wasp Vespa velutina.</title>
        <authorList>
            <person name="Liu Z."/>
            <person name="Chen S."/>
            <person name="Zhou Y."/>
            <person name="Xie C."/>
            <person name="Zhu B."/>
            <person name="Zhu H."/>
            <person name="Liu S."/>
            <person name="Wang W."/>
            <person name="Chen H."/>
            <person name="Ji Y."/>
        </authorList>
    </citation>
    <scope>NUCLEOTIDE SEQUENCE [LARGE SCALE MRNA]</scope>
    <source>
        <tissue evidence="7">Venom gland</tissue>
    </source>
</reference>
<reference evidence="9" key="2">
    <citation type="journal article" date="2020" name="PLoS ONE">
        <title>Purification and molecular characterization of phospholipase, antigen 5 and hyaluronidases from the venom of the Asian hornet (Vespa velutina).</title>
        <authorList>
            <person name="Monsalve R.I."/>
            <person name="Gutierrez R."/>
            <person name="Hoof I."/>
            <person name="Lombardero M."/>
        </authorList>
    </citation>
    <scope>PROTEIN SEQUENCE OF 1-5</scope>
    <scope>SUBCELLULAR LOCATION</scope>
    <scope>IDENTIFICATION BY MASS SPECTROMETRY</scope>
    <scope>GLYCOSYLATION AT ASN-61</scope>
    <source>
        <tissue evidence="7">Venom</tissue>
    </source>
</reference>
<sequence length="304" mass="33957">GLLPKCKLVPEQISFILSTRENRNGVFLTLDSLKKGGILNKSDLSSTQVVFLIHGFISSANNSNYMDMTKALLEKNDCMVISIDWRNGACTNEFQILKFIGYPKAVENTRTVGKYIADFSKLLMQKYKVSLANIRLIGHSLGAQIAGFAGKEYQKFKLGKYPEIIGLDPAGPLFKSNDCSQRICETDAHYVQIIHTSNNLGTERTLGTVDFYMNNGYNQPGCYYSFIGETCSHTRAVQYFTECIRHECCLIGVPQSKNPQPVSKCTRNECVCVGLNAKRYPKTGSFYVPVESKAPYCNNKGKKI</sequence>
<keyword id="KW-0903">Direct protein sequencing</keyword>
<keyword id="KW-1015">Disulfide bond</keyword>
<keyword id="KW-0325">Glycoprotein</keyword>
<keyword id="KW-0378">Hydrolase</keyword>
<keyword id="KW-0964">Secreted</keyword>
<accession>C0HLL3</accession>
<name>PA1_VESVE</name>
<proteinExistence type="evidence at protein level"/>
<evidence type="ECO:0000250" key="1">
    <source>
        <dbReference type="UniProtKB" id="A0A0M3KKW3"/>
    </source>
</evidence>
<evidence type="ECO:0000250" key="2">
    <source>
        <dbReference type="UniProtKB" id="P0DMB4"/>
    </source>
</evidence>
<evidence type="ECO:0000250" key="3">
    <source>
        <dbReference type="UniProtKB" id="P0DMB7"/>
    </source>
</evidence>
<evidence type="ECO:0000255" key="4">
    <source>
        <dbReference type="PROSITE-ProRule" id="PRU00498"/>
    </source>
</evidence>
<evidence type="ECO:0000255" key="5">
    <source>
        <dbReference type="PROSITE-ProRule" id="PRU10037"/>
    </source>
</evidence>
<evidence type="ECO:0000269" key="6">
    <source>
    </source>
</evidence>
<evidence type="ECO:0000303" key="7">
    <source>
    </source>
</evidence>
<evidence type="ECO:0000303" key="8">
    <source>
    </source>
</evidence>
<evidence type="ECO:0000305" key="9"/>
<evidence type="ECO:0000305" key="10">
    <source>
    </source>
</evidence>
<organism evidence="8">
    <name type="scientific">Vespa velutina</name>
    <name type="common">Asian yellow-legged hornet</name>
    <dbReference type="NCBI Taxonomy" id="202808"/>
    <lineage>
        <taxon>Eukaryota</taxon>
        <taxon>Metazoa</taxon>
        <taxon>Ecdysozoa</taxon>
        <taxon>Arthropoda</taxon>
        <taxon>Hexapoda</taxon>
        <taxon>Insecta</taxon>
        <taxon>Pterygota</taxon>
        <taxon>Neoptera</taxon>
        <taxon>Endopterygota</taxon>
        <taxon>Hymenoptera</taxon>
        <taxon>Apocrita</taxon>
        <taxon>Aculeata</taxon>
        <taxon>Vespoidea</taxon>
        <taxon>Vespidae</taxon>
        <taxon>Vespinae</taxon>
        <taxon>Vespa</taxon>
    </lineage>
</organism>
<dbReference type="EC" id="3.1.1.32" evidence="2"/>
<dbReference type="SMR" id="C0HLL3"/>
<dbReference type="ESTHER" id="vesve-pa1">
    <property type="family name" value="Insect_Phospholipase"/>
</dbReference>
<dbReference type="iPTMnet" id="C0HLL3"/>
<dbReference type="GO" id="GO:0005615">
    <property type="term" value="C:extracellular space"/>
    <property type="evidence" value="ECO:0007669"/>
    <property type="project" value="TreeGrafter"/>
</dbReference>
<dbReference type="GO" id="GO:0008970">
    <property type="term" value="F:phospholipase A1 activity"/>
    <property type="evidence" value="ECO:0007669"/>
    <property type="project" value="UniProtKB-EC"/>
</dbReference>
<dbReference type="GO" id="GO:0016042">
    <property type="term" value="P:lipid catabolic process"/>
    <property type="evidence" value="ECO:0007669"/>
    <property type="project" value="TreeGrafter"/>
</dbReference>
<dbReference type="CDD" id="cd00707">
    <property type="entry name" value="Pancreat_lipase_like"/>
    <property type="match status" value="1"/>
</dbReference>
<dbReference type="Gene3D" id="3.40.50.1820">
    <property type="entry name" value="alpha/beta hydrolase"/>
    <property type="match status" value="1"/>
</dbReference>
<dbReference type="InterPro" id="IPR029058">
    <property type="entry name" value="AB_hydrolase_fold"/>
</dbReference>
<dbReference type="InterPro" id="IPR002334">
    <property type="entry name" value="Allerg_PlipaseA1"/>
</dbReference>
<dbReference type="InterPro" id="IPR013818">
    <property type="entry name" value="Lipase"/>
</dbReference>
<dbReference type="InterPro" id="IPR033906">
    <property type="entry name" value="Lipase_N"/>
</dbReference>
<dbReference type="InterPro" id="IPR000734">
    <property type="entry name" value="TAG_lipase"/>
</dbReference>
<dbReference type="PANTHER" id="PTHR11610">
    <property type="entry name" value="LIPASE"/>
    <property type="match status" value="1"/>
</dbReference>
<dbReference type="PANTHER" id="PTHR11610:SF173">
    <property type="entry name" value="LIPASE DOMAIN-CONTAINING PROTEIN-RELATED"/>
    <property type="match status" value="1"/>
</dbReference>
<dbReference type="Pfam" id="PF00151">
    <property type="entry name" value="Lipase"/>
    <property type="match status" value="1"/>
</dbReference>
<dbReference type="PRINTS" id="PR00825">
    <property type="entry name" value="DOLALLERGEN"/>
</dbReference>
<dbReference type="PRINTS" id="PR00821">
    <property type="entry name" value="TAGLIPASE"/>
</dbReference>
<dbReference type="SUPFAM" id="SSF53474">
    <property type="entry name" value="alpha/beta-Hydrolases"/>
    <property type="match status" value="1"/>
</dbReference>
<dbReference type="PROSITE" id="PS00120">
    <property type="entry name" value="LIPASE_SER"/>
    <property type="match status" value="1"/>
</dbReference>
<comment type="function">
    <text evidence="2 3">Catalyzes the hydrolysis of phosphatidylcholine with phospholipase A1 activity (By similarity). May act as an allergen and induce hemolytic activity (By similarity).</text>
</comment>
<comment type="catalytic activity">
    <reaction evidence="2">
        <text>a 1,2-diacyl-sn-glycero-3-phosphocholine + H2O = a 2-acyl-sn-glycero-3-phosphocholine + a fatty acid + H(+)</text>
        <dbReference type="Rhea" id="RHEA:18689"/>
        <dbReference type="ChEBI" id="CHEBI:15377"/>
        <dbReference type="ChEBI" id="CHEBI:15378"/>
        <dbReference type="ChEBI" id="CHEBI:28868"/>
        <dbReference type="ChEBI" id="CHEBI:57643"/>
        <dbReference type="ChEBI" id="CHEBI:57875"/>
        <dbReference type="EC" id="3.1.1.32"/>
    </reaction>
</comment>
<comment type="subcellular location">
    <subcellularLocation>
        <location evidence="6">Secreted</location>
    </subcellularLocation>
</comment>
<comment type="tissue specificity">
    <text evidence="10">Expressed by the venom gland.</text>
</comment>
<comment type="similarity">
    <text evidence="9">Belongs to the AB hydrolase superfamily. Lipase family.</text>
</comment>